<protein>
    <recommendedName>
        <fullName evidence="1">Ribosome-releasing factor 2, mitochondrial</fullName>
        <shortName evidence="1">RRF2mt</shortName>
    </recommendedName>
    <alternativeName>
        <fullName evidence="1">Elongation factor G 2, mitochondrial</fullName>
        <shortName evidence="1">EF-G2mt</shortName>
        <shortName evidence="1">mEF-G 2</shortName>
    </alternativeName>
</protein>
<sequence>MWKWNVRRWAGARVNISKNRLSVINVGSRYLSTARSPLSKVRNIGIIAHIDAGKTTTTERMLYYAGISKHIGDVDTGDTITDFLEQERSRGITIQSAAISFPWRNTFAINLIDTPGHIDFTFEVIRALKVIDSCVVILDAVAGVEAQTEKVWKQSKSKPKICFINKMDRMGASFNHTVNDLINKFMRGTTTKPVLVNIPYYRKQPTSNDYVFQGVIDVVNGKRLTWNPENPDEIIVDELDGTSLEQCNRCRESMIETLTEYDEDLVQHFLEEAEGDYSKVSAQFLNASIRKLTMKNMIVPVLCGASFKNIGVQPLLDAIVNYLPSPIEAELPELNDKTVPMKYDPKVGCLVNNNKNLCIALAFKVITDPIRGKQIFIRIYSGTLNSGNTVYNSTTGEKFKLGKLLIPHAGTSQPVNILTAGQIGLLTGSTVENNISTGDTLITHSSKKDGLKSLDKKKELTLKINSIFIPPPVFGVSIEPRTLSNKKSMEEALNTLITEDPSLSISQNDETGQTVLNGMGELHLEIAKDRLVNDLKADVEFGQLMVSYKETINSETNIETYESDDGYRFSLSLLPNSDALPNCLAYPLGVNENFLIMEKNGNWDKEWKYQVSFESILNSIIASCIVGLQRGGKIANFPLYACSIKINSDWSVPPDIETPQEILKITRNLIFKALNDLKPEKYNLLEPIMNLDLTIPQSDVGTVLQDLTGARKAQILSIEDESSVSNSGASTCNSPENSNRIYIPSDAVTTLHATKDKKNTQETSSNVKKIIKAKVPLREITTYTNKLRSLSQGRGEFNIEYSDMEKVTNDRLQSILHDL</sequence>
<feature type="transit peptide" description="Mitochondrion" evidence="1">
    <location>
        <begin position="1"/>
        <end position="30"/>
    </location>
</feature>
<feature type="chain" id="PRO_0000385624" description="Ribosome-releasing factor 2, mitochondrial">
    <location>
        <begin position="31"/>
        <end position="819"/>
    </location>
</feature>
<feature type="domain" description="tr-type G">
    <location>
        <begin position="39"/>
        <end position="327"/>
    </location>
</feature>
<feature type="binding site" evidence="1">
    <location>
        <begin position="48"/>
        <end position="55"/>
    </location>
    <ligand>
        <name>GTP</name>
        <dbReference type="ChEBI" id="CHEBI:37565"/>
    </ligand>
</feature>
<feature type="binding site" evidence="1">
    <location>
        <begin position="113"/>
        <end position="117"/>
    </location>
    <ligand>
        <name>GTP</name>
        <dbReference type="ChEBI" id="CHEBI:37565"/>
    </ligand>
</feature>
<feature type="binding site" evidence="1">
    <location>
        <begin position="165"/>
        <end position="168"/>
    </location>
    <ligand>
        <name>GTP</name>
        <dbReference type="ChEBI" id="CHEBI:37565"/>
    </ligand>
</feature>
<dbReference type="EMBL" id="CH408050">
    <property type="protein sequence ID" value="EDV12664.1"/>
    <property type="molecule type" value="Genomic_DNA"/>
</dbReference>
<dbReference type="SMR" id="B3LQ11"/>
<dbReference type="HOGENOM" id="CLU_002794_4_1_1"/>
<dbReference type="OrthoDB" id="19804at4893"/>
<dbReference type="Proteomes" id="UP000008335">
    <property type="component" value="Unassembled WGS sequence"/>
</dbReference>
<dbReference type="GO" id="GO:0005739">
    <property type="term" value="C:mitochondrion"/>
    <property type="evidence" value="ECO:0007669"/>
    <property type="project" value="UniProtKB-SubCell"/>
</dbReference>
<dbReference type="GO" id="GO:0005525">
    <property type="term" value="F:GTP binding"/>
    <property type="evidence" value="ECO:0007669"/>
    <property type="project" value="UniProtKB-UniRule"/>
</dbReference>
<dbReference type="GO" id="GO:0003924">
    <property type="term" value="F:GTPase activity"/>
    <property type="evidence" value="ECO:0007669"/>
    <property type="project" value="UniProtKB-UniRule"/>
</dbReference>
<dbReference type="GO" id="GO:0032543">
    <property type="term" value="P:mitochondrial translation"/>
    <property type="evidence" value="ECO:0007669"/>
    <property type="project" value="UniProtKB-UniRule"/>
</dbReference>
<dbReference type="GO" id="GO:0032790">
    <property type="term" value="P:ribosome disassembly"/>
    <property type="evidence" value="ECO:0007669"/>
    <property type="project" value="UniProtKB-UniRule"/>
</dbReference>
<dbReference type="CDD" id="cd01886">
    <property type="entry name" value="EF-G"/>
    <property type="match status" value="1"/>
</dbReference>
<dbReference type="CDD" id="cd16262">
    <property type="entry name" value="EFG_III"/>
    <property type="match status" value="1"/>
</dbReference>
<dbReference type="CDD" id="cd03713">
    <property type="entry name" value="EFG_mtEFG_C"/>
    <property type="match status" value="1"/>
</dbReference>
<dbReference type="CDD" id="cd04092">
    <property type="entry name" value="mtEFG2_II_like"/>
    <property type="match status" value="1"/>
</dbReference>
<dbReference type="FunFam" id="2.40.30.10:FF:000166">
    <property type="entry name" value="Ribosome-releasing factor 2, mitochondrial"/>
    <property type="match status" value="1"/>
</dbReference>
<dbReference type="FunFam" id="3.30.70.240:FF:000024">
    <property type="entry name" value="Ribosome-releasing factor 2, mitochondrial"/>
    <property type="match status" value="1"/>
</dbReference>
<dbReference type="FunFam" id="3.30.70.870:FF:000007">
    <property type="entry name" value="Ribosome-releasing factor 2, mitochondrial"/>
    <property type="match status" value="1"/>
</dbReference>
<dbReference type="FunFam" id="3.40.50.300:FF:001636">
    <property type="entry name" value="Ribosome-releasing factor 2, mitochondrial"/>
    <property type="match status" value="1"/>
</dbReference>
<dbReference type="Gene3D" id="3.30.70.240">
    <property type="match status" value="1"/>
</dbReference>
<dbReference type="Gene3D" id="3.30.70.870">
    <property type="entry name" value="Elongation Factor G (Translational Gtpase), domain 3"/>
    <property type="match status" value="1"/>
</dbReference>
<dbReference type="Gene3D" id="3.40.50.300">
    <property type="entry name" value="P-loop containing nucleotide triphosphate hydrolases"/>
    <property type="match status" value="1"/>
</dbReference>
<dbReference type="Gene3D" id="2.40.30.10">
    <property type="entry name" value="Translation factors"/>
    <property type="match status" value="1"/>
</dbReference>
<dbReference type="HAMAP" id="MF_03059">
    <property type="entry name" value="mEF_G_2"/>
    <property type="match status" value="1"/>
</dbReference>
<dbReference type="InterPro" id="IPR030851">
    <property type="entry name" value="EFG2"/>
</dbReference>
<dbReference type="InterPro" id="IPR041095">
    <property type="entry name" value="EFG_II"/>
</dbReference>
<dbReference type="InterPro" id="IPR009022">
    <property type="entry name" value="EFG_III"/>
</dbReference>
<dbReference type="InterPro" id="IPR035647">
    <property type="entry name" value="EFG_III/V"/>
</dbReference>
<dbReference type="InterPro" id="IPR035649">
    <property type="entry name" value="EFG_V"/>
</dbReference>
<dbReference type="InterPro" id="IPR000640">
    <property type="entry name" value="EFG_V-like"/>
</dbReference>
<dbReference type="InterPro" id="IPR004161">
    <property type="entry name" value="EFTu-like_2"/>
</dbReference>
<dbReference type="InterPro" id="IPR031157">
    <property type="entry name" value="G_TR_CS"/>
</dbReference>
<dbReference type="InterPro" id="IPR027417">
    <property type="entry name" value="P-loop_NTPase"/>
</dbReference>
<dbReference type="InterPro" id="IPR005225">
    <property type="entry name" value="Small_GTP-bd"/>
</dbReference>
<dbReference type="InterPro" id="IPR000795">
    <property type="entry name" value="T_Tr_GTP-bd_dom"/>
</dbReference>
<dbReference type="InterPro" id="IPR009000">
    <property type="entry name" value="Transl_B-barrel_sf"/>
</dbReference>
<dbReference type="NCBIfam" id="TIGR00231">
    <property type="entry name" value="small_GTP"/>
    <property type="match status" value="1"/>
</dbReference>
<dbReference type="PANTHER" id="PTHR43261:SF1">
    <property type="entry name" value="RIBOSOME-RELEASING FACTOR 2, MITOCHONDRIAL"/>
    <property type="match status" value="1"/>
</dbReference>
<dbReference type="PANTHER" id="PTHR43261">
    <property type="entry name" value="TRANSLATION ELONGATION FACTOR G-RELATED"/>
    <property type="match status" value="1"/>
</dbReference>
<dbReference type="Pfam" id="PF00679">
    <property type="entry name" value="EFG_C"/>
    <property type="match status" value="1"/>
</dbReference>
<dbReference type="Pfam" id="PF14492">
    <property type="entry name" value="EFG_III"/>
    <property type="match status" value="1"/>
</dbReference>
<dbReference type="Pfam" id="PF00009">
    <property type="entry name" value="GTP_EFTU"/>
    <property type="match status" value="1"/>
</dbReference>
<dbReference type="Pfam" id="PF03144">
    <property type="entry name" value="GTP_EFTU_D2"/>
    <property type="match status" value="1"/>
</dbReference>
<dbReference type="PRINTS" id="PR00315">
    <property type="entry name" value="ELONGATNFCT"/>
</dbReference>
<dbReference type="SMART" id="SM00838">
    <property type="entry name" value="EFG_C"/>
    <property type="match status" value="1"/>
</dbReference>
<dbReference type="SUPFAM" id="SSF54980">
    <property type="entry name" value="EF-G C-terminal domain-like"/>
    <property type="match status" value="2"/>
</dbReference>
<dbReference type="SUPFAM" id="SSF52540">
    <property type="entry name" value="P-loop containing nucleoside triphosphate hydrolases"/>
    <property type="match status" value="1"/>
</dbReference>
<dbReference type="SUPFAM" id="SSF50447">
    <property type="entry name" value="Translation proteins"/>
    <property type="match status" value="1"/>
</dbReference>
<dbReference type="PROSITE" id="PS00301">
    <property type="entry name" value="G_TR_1"/>
    <property type="match status" value="1"/>
</dbReference>
<dbReference type="PROSITE" id="PS51722">
    <property type="entry name" value="G_TR_2"/>
    <property type="match status" value="1"/>
</dbReference>
<accession>B3LQ11</accession>
<proteinExistence type="inferred from homology"/>
<organism>
    <name type="scientific">Saccharomyces cerevisiae (strain RM11-1a)</name>
    <name type="common">Baker's yeast</name>
    <dbReference type="NCBI Taxonomy" id="285006"/>
    <lineage>
        <taxon>Eukaryota</taxon>
        <taxon>Fungi</taxon>
        <taxon>Dikarya</taxon>
        <taxon>Ascomycota</taxon>
        <taxon>Saccharomycotina</taxon>
        <taxon>Saccharomycetes</taxon>
        <taxon>Saccharomycetales</taxon>
        <taxon>Saccharomycetaceae</taxon>
        <taxon>Saccharomyces</taxon>
    </lineage>
</organism>
<keyword id="KW-0342">GTP-binding</keyword>
<keyword id="KW-0496">Mitochondrion</keyword>
<keyword id="KW-0547">Nucleotide-binding</keyword>
<keyword id="KW-0648">Protein biosynthesis</keyword>
<keyword id="KW-0809">Transit peptide</keyword>
<reference key="1">
    <citation type="submission" date="2005-03" db="EMBL/GenBank/DDBJ databases">
        <title>Annotation of the Saccharomyces cerevisiae RM11-1a genome.</title>
        <authorList>
            <consortium name="The Broad Institute Genome Sequencing Platform"/>
            <person name="Birren B.W."/>
            <person name="Lander E.S."/>
            <person name="Galagan J.E."/>
            <person name="Nusbaum C."/>
            <person name="Devon K."/>
            <person name="Cuomo C."/>
            <person name="Jaffe D.B."/>
            <person name="Butler J."/>
            <person name="Alvarez P."/>
            <person name="Gnerre S."/>
            <person name="Grabherr M."/>
            <person name="Kleber M."/>
            <person name="Mauceli E.W."/>
            <person name="Brockman W."/>
            <person name="MacCallum I.A."/>
            <person name="Rounsley S."/>
            <person name="Young S.K."/>
            <person name="LaButti K."/>
            <person name="Pushparaj V."/>
            <person name="DeCaprio D."/>
            <person name="Crawford M."/>
            <person name="Koehrsen M."/>
            <person name="Engels R."/>
            <person name="Montgomery P."/>
            <person name="Pearson M."/>
            <person name="Howarth C."/>
            <person name="Larson L."/>
            <person name="Luoma S."/>
            <person name="White J."/>
            <person name="O'Leary S."/>
            <person name="Kodira C.D."/>
            <person name="Zeng Q."/>
            <person name="Yandava C."/>
            <person name="Alvarado L."/>
            <person name="Pratt S."/>
            <person name="Kruglyak L."/>
        </authorList>
    </citation>
    <scope>NUCLEOTIDE SEQUENCE [LARGE SCALE GENOMIC DNA]</scope>
    <source>
        <strain>RM11-1a</strain>
    </source>
</reference>
<evidence type="ECO:0000255" key="1">
    <source>
        <dbReference type="HAMAP-Rule" id="MF_03059"/>
    </source>
</evidence>
<gene>
    <name evidence="1" type="primary">MEF2</name>
    <name type="ORF">SCRG_03569</name>
</gene>
<name>RRF2M_YEAS1</name>
<comment type="function">
    <text evidence="1">Mitochondrial GTPase that mediates the disassembly of ribosomes from messenger RNA at the termination of mitochondrial protein biosynthesis. Not involved in the GTP-dependent ribosomal translocation step during translation elongation.</text>
</comment>
<comment type="subcellular location">
    <subcellularLocation>
        <location evidence="1">Mitochondrion</location>
    </subcellularLocation>
</comment>
<comment type="similarity">
    <text evidence="1">Belongs to the TRAFAC class translation factor GTPase superfamily. Classic translation factor GTPase family. EF-G/EF-2 subfamily.</text>
</comment>